<evidence type="ECO:0000255" key="1">
    <source>
        <dbReference type="HAMAP-Rule" id="MF_00296"/>
    </source>
</evidence>
<dbReference type="EC" id="2.3.1.46" evidence="1"/>
<dbReference type="EMBL" id="AE002098">
    <property type="protein sequence ID" value="AAF41346.1"/>
    <property type="molecule type" value="Genomic_DNA"/>
</dbReference>
<dbReference type="PIR" id="A81140">
    <property type="entry name" value="A81140"/>
</dbReference>
<dbReference type="RefSeq" id="NP_273978.1">
    <property type="nucleotide sequence ID" value="NC_003112.2"/>
</dbReference>
<dbReference type="SMR" id="Q9JZQ5"/>
<dbReference type="STRING" id="122586.NMB0940"/>
<dbReference type="ESTHER" id="neima-metx">
    <property type="family name" value="Homoserine_transacetylase"/>
</dbReference>
<dbReference type="PaxDb" id="122586-NMB0940"/>
<dbReference type="KEGG" id="nme:NMB0940"/>
<dbReference type="PATRIC" id="fig|122586.8.peg.1192"/>
<dbReference type="HOGENOM" id="CLU_028760_1_2_4"/>
<dbReference type="InParanoid" id="Q9JZQ5"/>
<dbReference type="OrthoDB" id="9800754at2"/>
<dbReference type="UniPathway" id="UPA00051">
    <property type="reaction ID" value="UER00075"/>
</dbReference>
<dbReference type="Proteomes" id="UP000000425">
    <property type="component" value="Chromosome"/>
</dbReference>
<dbReference type="GO" id="GO:0005737">
    <property type="term" value="C:cytoplasm"/>
    <property type="evidence" value="ECO:0007669"/>
    <property type="project" value="UniProtKB-SubCell"/>
</dbReference>
<dbReference type="GO" id="GO:0004414">
    <property type="term" value="F:homoserine O-acetyltransferase activity"/>
    <property type="evidence" value="ECO:0000318"/>
    <property type="project" value="GO_Central"/>
</dbReference>
<dbReference type="GO" id="GO:0008899">
    <property type="term" value="F:homoserine O-succinyltransferase activity"/>
    <property type="evidence" value="ECO:0007669"/>
    <property type="project" value="UniProtKB-UniRule"/>
</dbReference>
<dbReference type="GO" id="GO:0009086">
    <property type="term" value="P:methionine biosynthetic process"/>
    <property type="evidence" value="ECO:0000318"/>
    <property type="project" value="GO_Central"/>
</dbReference>
<dbReference type="FunFam" id="1.10.1740.110:FF:000001">
    <property type="entry name" value="Homoserine O-acetyltransferase"/>
    <property type="match status" value="1"/>
</dbReference>
<dbReference type="Gene3D" id="1.10.1740.110">
    <property type="match status" value="1"/>
</dbReference>
<dbReference type="Gene3D" id="3.40.50.1820">
    <property type="entry name" value="alpha/beta hydrolase"/>
    <property type="match status" value="1"/>
</dbReference>
<dbReference type="HAMAP" id="MF_00296">
    <property type="entry name" value="MetX_acyltransf"/>
    <property type="match status" value="1"/>
</dbReference>
<dbReference type="InterPro" id="IPR000073">
    <property type="entry name" value="AB_hydrolase_1"/>
</dbReference>
<dbReference type="InterPro" id="IPR029058">
    <property type="entry name" value="AB_hydrolase_fold"/>
</dbReference>
<dbReference type="InterPro" id="IPR008220">
    <property type="entry name" value="HAT_MetX-like"/>
</dbReference>
<dbReference type="NCBIfam" id="TIGR01392">
    <property type="entry name" value="homoserO_Ac_trn"/>
    <property type="match status" value="1"/>
</dbReference>
<dbReference type="NCBIfam" id="NF001209">
    <property type="entry name" value="PRK00175.1"/>
    <property type="match status" value="1"/>
</dbReference>
<dbReference type="PANTHER" id="PTHR32268">
    <property type="entry name" value="HOMOSERINE O-ACETYLTRANSFERASE"/>
    <property type="match status" value="1"/>
</dbReference>
<dbReference type="PANTHER" id="PTHR32268:SF11">
    <property type="entry name" value="HOMOSERINE O-ACETYLTRANSFERASE"/>
    <property type="match status" value="1"/>
</dbReference>
<dbReference type="Pfam" id="PF00561">
    <property type="entry name" value="Abhydrolase_1"/>
    <property type="match status" value="1"/>
</dbReference>
<dbReference type="PIRSF" id="PIRSF000443">
    <property type="entry name" value="Homoser_Ac_trans"/>
    <property type="match status" value="1"/>
</dbReference>
<dbReference type="SUPFAM" id="SSF53474">
    <property type="entry name" value="alpha/beta-Hydrolases"/>
    <property type="match status" value="1"/>
</dbReference>
<comment type="function">
    <text evidence="1">Transfers a succinyl group from succinyl-CoA to L-homoserine, forming succinyl-L-homoserine.</text>
</comment>
<comment type="catalytic activity">
    <reaction evidence="1">
        <text>L-homoserine + succinyl-CoA = O-succinyl-L-homoserine + CoA</text>
        <dbReference type="Rhea" id="RHEA:22008"/>
        <dbReference type="ChEBI" id="CHEBI:57287"/>
        <dbReference type="ChEBI" id="CHEBI:57292"/>
        <dbReference type="ChEBI" id="CHEBI:57476"/>
        <dbReference type="ChEBI" id="CHEBI:57661"/>
        <dbReference type="EC" id="2.3.1.46"/>
    </reaction>
</comment>
<comment type="pathway">
    <text evidence="1">Amino-acid biosynthesis; L-methionine biosynthesis via de novo pathway; O-succinyl-L-homoserine from L-homoserine: step 1/1.</text>
</comment>
<comment type="subunit">
    <text evidence="1">Homodimer.</text>
</comment>
<comment type="subcellular location">
    <subcellularLocation>
        <location evidence="1">Cytoplasm</location>
    </subcellularLocation>
</comment>
<comment type="similarity">
    <text evidence="1">Belongs to the AB hydrolase superfamily. MetX family.</text>
</comment>
<protein>
    <recommendedName>
        <fullName evidence="1">Homoserine O-succinyltransferase</fullName>
        <shortName evidence="1">HST</shortName>
        <ecNumber evidence="1">2.3.1.46</ecNumber>
    </recommendedName>
    <alternativeName>
        <fullName evidence="1">Homoserine transsuccinylase</fullName>
        <shortName evidence="1">HTS</shortName>
    </alternativeName>
</protein>
<reference key="1">
    <citation type="journal article" date="2000" name="Science">
        <title>Complete genome sequence of Neisseria meningitidis serogroup B strain MC58.</title>
        <authorList>
            <person name="Tettelin H."/>
            <person name="Saunders N.J."/>
            <person name="Heidelberg J.F."/>
            <person name="Jeffries A.C."/>
            <person name="Nelson K.E."/>
            <person name="Eisen J.A."/>
            <person name="Ketchum K.A."/>
            <person name="Hood D.W."/>
            <person name="Peden J.F."/>
            <person name="Dodson R.J."/>
            <person name="Nelson W.C."/>
            <person name="Gwinn M.L."/>
            <person name="DeBoy R.T."/>
            <person name="Peterson J.D."/>
            <person name="Hickey E.K."/>
            <person name="Haft D.H."/>
            <person name="Salzberg S.L."/>
            <person name="White O."/>
            <person name="Fleischmann R.D."/>
            <person name="Dougherty B.A."/>
            <person name="Mason T.M."/>
            <person name="Ciecko A."/>
            <person name="Parksey D.S."/>
            <person name="Blair E."/>
            <person name="Cittone H."/>
            <person name="Clark E.B."/>
            <person name="Cotton M.D."/>
            <person name="Utterback T.R."/>
            <person name="Khouri H.M."/>
            <person name="Qin H."/>
            <person name="Vamathevan J.J."/>
            <person name="Gill J."/>
            <person name="Scarlato V."/>
            <person name="Masignani V."/>
            <person name="Pizza M."/>
            <person name="Grandi G."/>
            <person name="Sun L."/>
            <person name="Smith H.O."/>
            <person name="Fraser C.M."/>
            <person name="Moxon E.R."/>
            <person name="Rappuoli R."/>
            <person name="Venter J.C."/>
        </authorList>
    </citation>
    <scope>NUCLEOTIDE SEQUENCE [LARGE SCALE GENOMIC DNA]</scope>
    <source>
        <strain>ATCC BAA-335 / MC58</strain>
    </source>
</reference>
<proteinExistence type="inferred from homology"/>
<sequence length="379" mass="42174">MSQNASVGIVMPQKIPFEMPLVLENGKTLPRFDLMIETYGELNAEKNNAVLICHALSGNHHVAGRHSAEDKYTGWWDNMVGPGKPIDTERFFVVGLNNLGGCDGSSGPLSINPETGREYGADFPVVTVKDWVKSQAALADYLGIEQWAAIVGGSLGGMQALQWTISYPERVRHALVIASAPKLSTQNIAFNDVARQAILTDPDFNEGHYRSHNTVPARGLRIARMMGHITYLAEDGLGKKFGRDLRSNGYQYGFGVEFEVESYLRYQGDKFVGRFDANTYLLMTKALDYFDPAADFGDSLTRALQNVKAKFFVASFSTDWRFAPERSHELVKALIAAQKSVQYIEVKSAHGHDAFLMEDEAYMRAVAAYMNNVYKECQQ</sequence>
<feature type="chain" id="PRO_0000155733" description="Homoserine O-succinyltransferase">
    <location>
        <begin position="1"/>
        <end position="379"/>
    </location>
</feature>
<feature type="domain" description="AB hydrolase-1" evidence="1">
    <location>
        <begin position="48"/>
        <end position="357"/>
    </location>
</feature>
<feature type="active site" description="Nucleophile" evidence="1">
    <location>
        <position position="154"/>
    </location>
</feature>
<feature type="active site" evidence="1">
    <location>
        <position position="319"/>
    </location>
</feature>
<feature type="active site" evidence="1">
    <location>
        <position position="352"/>
    </location>
</feature>
<feature type="binding site" evidence="1">
    <location>
        <position position="224"/>
    </location>
    <ligand>
        <name>substrate</name>
    </ligand>
</feature>
<feature type="binding site" evidence="1">
    <location>
        <position position="353"/>
    </location>
    <ligand>
        <name>substrate</name>
    </ligand>
</feature>
<feature type="site" description="Important for acyl-CoA specificity" evidence="1">
    <location>
        <position position="321"/>
    </location>
</feature>
<gene>
    <name evidence="1" type="primary">metXS</name>
    <name type="ordered locus">NMB0940</name>
</gene>
<keyword id="KW-0012">Acyltransferase</keyword>
<keyword id="KW-0028">Amino-acid biosynthesis</keyword>
<keyword id="KW-0963">Cytoplasm</keyword>
<keyword id="KW-0486">Methionine biosynthesis</keyword>
<keyword id="KW-1185">Reference proteome</keyword>
<keyword id="KW-0808">Transferase</keyword>
<accession>Q9JZQ5</accession>
<organism>
    <name type="scientific">Neisseria meningitidis serogroup B (strain ATCC BAA-335 / MC58)</name>
    <dbReference type="NCBI Taxonomy" id="122586"/>
    <lineage>
        <taxon>Bacteria</taxon>
        <taxon>Pseudomonadati</taxon>
        <taxon>Pseudomonadota</taxon>
        <taxon>Betaproteobacteria</taxon>
        <taxon>Neisseriales</taxon>
        <taxon>Neisseriaceae</taxon>
        <taxon>Neisseria</taxon>
    </lineage>
</organism>
<name>METXS_NEIMB</name>